<reference key="1">
    <citation type="journal article" date="1995" name="Biol. Pharm. Bull.">
        <title>A sapecin homologue of Holotrichia diomphalia: purification, sequencing and determination of disulfide pairs.</title>
        <authorList>
            <person name="Lee S.Y."/>
            <person name="Moon H.J."/>
            <person name="Kawabata S."/>
            <person name="Kurata S."/>
            <person name="Natori S."/>
            <person name="Lee B.L."/>
        </authorList>
    </citation>
    <scope>PROTEIN SEQUENCE</scope>
    <scope>DISULFIDE BONDS</scope>
    <scope>CHARACTERIZATION</scope>
</reference>
<feature type="chain" id="PRO_0000074472" description="Holotricin-1">
    <location>
        <begin position="1"/>
        <end position="43"/>
    </location>
</feature>
<feature type="disulfide bond" evidence="1 2">
    <location>
        <begin position="3"/>
        <end position="34"/>
    </location>
</feature>
<feature type="disulfide bond" evidence="1 2">
    <location>
        <begin position="20"/>
        <end position="39"/>
    </location>
</feature>
<feature type="disulfide bond" evidence="1 2">
    <location>
        <begin position="24"/>
        <end position="41"/>
    </location>
</feature>
<dbReference type="PIR" id="JC2554">
    <property type="entry name" value="JC2554"/>
</dbReference>
<dbReference type="SMR" id="Q7M426"/>
<dbReference type="GO" id="GO:0005615">
    <property type="term" value="C:extracellular space"/>
    <property type="evidence" value="ECO:0007669"/>
    <property type="project" value="TreeGrafter"/>
</dbReference>
<dbReference type="GO" id="GO:0042742">
    <property type="term" value="P:defense response to bacterium"/>
    <property type="evidence" value="ECO:0007669"/>
    <property type="project" value="UniProtKB-KW"/>
</dbReference>
<dbReference type="GO" id="GO:0006959">
    <property type="term" value="P:humoral immune response"/>
    <property type="evidence" value="ECO:0007669"/>
    <property type="project" value="TreeGrafter"/>
</dbReference>
<dbReference type="GO" id="GO:0045087">
    <property type="term" value="P:innate immune response"/>
    <property type="evidence" value="ECO:0007669"/>
    <property type="project" value="UniProtKB-KW"/>
</dbReference>
<dbReference type="Gene3D" id="3.30.30.10">
    <property type="entry name" value="Knottin, scorpion toxin-like"/>
    <property type="match status" value="1"/>
</dbReference>
<dbReference type="InterPro" id="IPR017982">
    <property type="entry name" value="Defensin_insect"/>
</dbReference>
<dbReference type="InterPro" id="IPR001542">
    <property type="entry name" value="Defensin_invertebrate/fungal"/>
</dbReference>
<dbReference type="InterPro" id="IPR003614">
    <property type="entry name" value="Scorpion_toxin-like"/>
</dbReference>
<dbReference type="InterPro" id="IPR036574">
    <property type="entry name" value="Scorpion_toxin-like_sf"/>
</dbReference>
<dbReference type="PANTHER" id="PTHR13645">
    <property type="entry name" value="DEFENSIN"/>
    <property type="match status" value="1"/>
</dbReference>
<dbReference type="PANTHER" id="PTHR13645:SF0">
    <property type="entry name" value="DEFENSIN"/>
    <property type="match status" value="1"/>
</dbReference>
<dbReference type="Pfam" id="PF01097">
    <property type="entry name" value="Defensin_2"/>
    <property type="match status" value="1"/>
</dbReference>
<dbReference type="PRINTS" id="PR00271">
    <property type="entry name" value="DEFENSIN"/>
</dbReference>
<dbReference type="SMART" id="SM00505">
    <property type="entry name" value="Knot1"/>
    <property type="match status" value="1"/>
</dbReference>
<dbReference type="SUPFAM" id="SSF57095">
    <property type="entry name" value="Scorpion toxin-like"/>
    <property type="match status" value="1"/>
</dbReference>
<dbReference type="PROSITE" id="PS51378">
    <property type="entry name" value="INVERT_DEFENSINS"/>
    <property type="match status" value="1"/>
</dbReference>
<evidence type="ECO:0000255" key="1">
    <source>
        <dbReference type="PROSITE-ProRule" id="PRU00710"/>
    </source>
</evidence>
<evidence type="ECO:0000269" key="2">
    <source>
    </source>
</evidence>
<organism>
    <name type="scientific">Holotrichia diomphalia</name>
    <name type="common">Korean black chafer</name>
    <dbReference type="NCBI Taxonomy" id="33394"/>
    <lineage>
        <taxon>Eukaryota</taxon>
        <taxon>Metazoa</taxon>
        <taxon>Ecdysozoa</taxon>
        <taxon>Arthropoda</taxon>
        <taxon>Hexapoda</taxon>
        <taxon>Insecta</taxon>
        <taxon>Pterygota</taxon>
        <taxon>Neoptera</taxon>
        <taxon>Endopterygota</taxon>
        <taxon>Coleoptera</taxon>
        <taxon>Polyphaga</taxon>
        <taxon>Scarabaeiformia</taxon>
        <taxon>Scarabaeidae</taxon>
        <taxon>Melolonthinae</taxon>
        <taxon>Holotrichia</taxon>
    </lineage>
</organism>
<proteinExistence type="evidence at protein level"/>
<name>DEF1_HOLDI</name>
<accession>Q7M426</accession>
<protein>
    <recommendedName>
        <fullName>Holotricin-1</fullName>
    </recommendedName>
</protein>
<sequence>VTCDLLSLQIKGIAINDSACAAHCLAMRRKGGSCKQGVCVCRN</sequence>
<comment type="function">
    <text>Shows potent antibacterial activity against Gram-positive bacteria.</text>
</comment>
<comment type="subcellular location">
    <subcellularLocation>
        <location>Secreted</location>
    </subcellularLocation>
</comment>
<comment type="tissue specificity">
    <text>Hemolymph.</text>
</comment>
<comment type="similarity">
    <text evidence="1">Belongs to the invertebrate defensin family. Type 1 subfamily.</text>
</comment>
<keyword id="KW-0044">Antibiotic</keyword>
<keyword id="KW-0929">Antimicrobial</keyword>
<keyword id="KW-0211">Defensin</keyword>
<keyword id="KW-0903">Direct protein sequencing</keyword>
<keyword id="KW-1015">Disulfide bond</keyword>
<keyword id="KW-0391">Immunity</keyword>
<keyword id="KW-0399">Innate immunity</keyword>
<keyword id="KW-0964">Secreted</keyword>